<keyword id="KW-0012">Acyltransferase</keyword>
<keyword id="KW-0963">Cytoplasm</keyword>
<keyword id="KW-0808">Transferase</keyword>
<gene>
    <name evidence="1" type="primary">lipB</name>
    <name type="ordered locus">SGR_5320</name>
</gene>
<feature type="chain" id="PRO_1000089478" description="Octanoyltransferase">
    <location>
        <begin position="1"/>
        <end position="273"/>
    </location>
</feature>
<feature type="domain" description="BPL/LPL catalytic" evidence="2">
    <location>
        <begin position="35"/>
        <end position="254"/>
    </location>
</feature>
<feature type="active site" description="Acyl-thioester intermediate" evidence="1">
    <location>
        <position position="215"/>
    </location>
</feature>
<feature type="binding site" evidence="1">
    <location>
        <begin position="73"/>
        <end position="80"/>
    </location>
    <ligand>
        <name>substrate</name>
    </ligand>
</feature>
<feature type="binding site" evidence="1">
    <location>
        <begin position="184"/>
        <end position="186"/>
    </location>
    <ligand>
        <name>substrate</name>
    </ligand>
</feature>
<feature type="binding site" evidence="1">
    <location>
        <begin position="197"/>
        <end position="199"/>
    </location>
    <ligand>
        <name>substrate</name>
    </ligand>
</feature>
<feature type="site" description="Lowers pKa of active site Cys" evidence="1">
    <location>
        <position position="181"/>
    </location>
</feature>
<proteinExistence type="inferred from homology"/>
<reference key="1">
    <citation type="journal article" date="2008" name="J. Bacteriol.">
        <title>Genome sequence of the streptomycin-producing microorganism Streptomyces griseus IFO 13350.</title>
        <authorList>
            <person name="Ohnishi Y."/>
            <person name="Ishikawa J."/>
            <person name="Hara H."/>
            <person name="Suzuki H."/>
            <person name="Ikenoya M."/>
            <person name="Ikeda H."/>
            <person name="Yamashita A."/>
            <person name="Hattori M."/>
            <person name="Horinouchi S."/>
        </authorList>
    </citation>
    <scope>NUCLEOTIDE SEQUENCE [LARGE SCALE GENOMIC DNA]</scope>
    <source>
        <strain>JCM 4626 / CBS 651.72 / NBRC 13350 / KCC S-0626 / ISP 5235</strain>
    </source>
</reference>
<sequence>MSELRFVRLGFGEQAVEYTEAWQKQREVHADRFEDRVPDTCLLLEHPPVYTAGRRTAESERPLDGTPVVDVDRGGKITWHGPGQLVGYPIQKLPRPVDVVAHVRRLEEALIRTAADFGVETSRIEGRSGVWVLGDPVERRQALGGLSLDFDPRLQDEEFDPRLNGPEYAPSNAGQRREDRKLAAIGIRVAKGVTMHGFALNVNPDNTWFDRIVPCGIRDAGVTSLSAELGREVTVEEVLPVAERHLRDILENAELAPRAVEQPKAAAPAPAPA</sequence>
<accession>B1VZM4</accession>
<evidence type="ECO:0000255" key="1">
    <source>
        <dbReference type="HAMAP-Rule" id="MF_00013"/>
    </source>
</evidence>
<evidence type="ECO:0000255" key="2">
    <source>
        <dbReference type="PROSITE-ProRule" id="PRU01067"/>
    </source>
</evidence>
<name>LIPB_STRGG</name>
<organism>
    <name type="scientific">Streptomyces griseus subsp. griseus (strain JCM 4626 / CBS 651.72 / NBRC 13350 / KCC S-0626 / ISP 5235)</name>
    <dbReference type="NCBI Taxonomy" id="455632"/>
    <lineage>
        <taxon>Bacteria</taxon>
        <taxon>Bacillati</taxon>
        <taxon>Actinomycetota</taxon>
        <taxon>Actinomycetes</taxon>
        <taxon>Kitasatosporales</taxon>
        <taxon>Streptomycetaceae</taxon>
        <taxon>Streptomyces</taxon>
    </lineage>
</organism>
<protein>
    <recommendedName>
        <fullName evidence="1">Octanoyltransferase</fullName>
        <ecNumber evidence="1">2.3.1.181</ecNumber>
    </recommendedName>
    <alternativeName>
        <fullName evidence="1">Lipoate-protein ligase B</fullName>
    </alternativeName>
    <alternativeName>
        <fullName evidence="1">Lipoyl/octanoyl transferase</fullName>
    </alternativeName>
    <alternativeName>
        <fullName evidence="1">Octanoyl-[acyl-carrier-protein]-protein N-octanoyltransferase</fullName>
    </alternativeName>
</protein>
<comment type="function">
    <text evidence="1">Catalyzes the transfer of endogenously produced octanoic acid from octanoyl-acyl-carrier-protein onto the lipoyl domains of lipoate-dependent enzymes. Lipoyl-ACP can also act as a substrate although octanoyl-ACP is likely to be the physiological substrate.</text>
</comment>
<comment type="catalytic activity">
    <reaction evidence="1">
        <text>octanoyl-[ACP] + L-lysyl-[protein] = N(6)-octanoyl-L-lysyl-[protein] + holo-[ACP] + H(+)</text>
        <dbReference type="Rhea" id="RHEA:17665"/>
        <dbReference type="Rhea" id="RHEA-COMP:9636"/>
        <dbReference type="Rhea" id="RHEA-COMP:9685"/>
        <dbReference type="Rhea" id="RHEA-COMP:9752"/>
        <dbReference type="Rhea" id="RHEA-COMP:9928"/>
        <dbReference type="ChEBI" id="CHEBI:15378"/>
        <dbReference type="ChEBI" id="CHEBI:29969"/>
        <dbReference type="ChEBI" id="CHEBI:64479"/>
        <dbReference type="ChEBI" id="CHEBI:78463"/>
        <dbReference type="ChEBI" id="CHEBI:78809"/>
        <dbReference type="EC" id="2.3.1.181"/>
    </reaction>
</comment>
<comment type="pathway">
    <text evidence="1">Protein modification; protein lipoylation via endogenous pathway; protein N(6)-(lipoyl)lysine from octanoyl-[acyl-carrier-protein]: step 1/2.</text>
</comment>
<comment type="subcellular location">
    <subcellularLocation>
        <location evidence="1">Cytoplasm</location>
    </subcellularLocation>
</comment>
<comment type="miscellaneous">
    <text evidence="1">In the reaction, the free carboxyl group of octanoic acid is attached via an amide linkage to the epsilon-amino group of a specific lysine residue of lipoyl domains of lipoate-dependent enzymes.</text>
</comment>
<comment type="similarity">
    <text evidence="1">Belongs to the LipB family.</text>
</comment>
<dbReference type="EC" id="2.3.1.181" evidence="1"/>
<dbReference type="EMBL" id="AP009493">
    <property type="protein sequence ID" value="BAG22149.1"/>
    <property type="molecule type" value="Genomic_DNA"/>
</dbReference>
<dbReference type="RefSeq" id="WP_012381242.1">
    <property type="nucleotide sequence ID" value="NC_010572.1"/>
</dbReference>
<dbReference type="SMR" id="B1VZM4"/>
<dbReference type="KEGG" id="sgr:SGR_5320"/>
<dbReference type="PATRIC" id="fig|455632.4.peg.5450"/>
<dbReference type="eggNOG" id="COG0321">
    <property type="taxonomic scope" value="Bacteria"/>
</dbReference>
<dbReference type="HOGENOM" id="CLU_035168_2_1_11"/>
<dbReference type="UniPathway" id="UPA00538">
    <property type="reaction ID" value="UER00592"/>
</dbReference>
<dbReference type="Proteomes" id="UP000001685">
    <property type="component" value="Chromosome"/>
</dbReference>
<dbReference type="GO" id="GO:0005737">
    <property type="term" value="C:cytoplasm"/>
    <property type="evidence" value="ECO:0007669"/>
    <property type="project" value="UniProtKB-SubCell"/>
</dbReference>
<dbReference type="GO" id="GO:0033819">
    <property type="term" value="F:lipoyl(octanoyl) transferase activity"/>
    <property type="evidence" value="ECO:0007669"/>
    <property type="project" value="UniProtKB-EC"/>
</dbReference>
<dbReference type="GO" id="GO:0036211">
    <property type="term" value="P:protein modification process"/>
    <property type="evidence" value="ECO:0007669"/>
    <property type="project" value="InterPro"/>
</dbReference>
<dbReference type="CDD" id="cd16444">
    <property type="entry name" value="LipB"/>
    <property type="match status" value="1"/>
</dbReference>
<dbReference type="Gene3D" id="3.30.930.10">
    <property type="entry name" value="Bira Bifunctional Protein, Domain 2"/>
    <property type="match status" value="1"/>
</dbReference>
<dbReference type="HAMAP" id="MF_00013">
    <property type="entry name" value="LipB"/>
    <property type="match status" value="1"/>
</dbReference>
<dbReference type="InterPro" id="IPR045864">
    <property type="entry name" value="aa-tRNA-synth_II/BPL/LPL"/>
</dbReference>
<dbReference type="InterPro" id="IPR004143">
    <property type="entry name" value="BPL_LPL_catalytic"/>
</dbReference>
<dbReference type="InterPro" id="IPR000544">
    <property type="entry name" value="Octanoyltransferase"/>
</dbReference>
<dbReference type="InterPro" id="IPR020605">
    <property type="entry name" value="Octanoyltransferase_CS"/>
</dbReference>
<dbReference type="NCBIfam" id="NF010925">
    <property type="entry name" value="PRK14345.1"/>
    <property type="match status" value="1"/>
</dbReference>
<dbReference type="PANTHER" id="PTHR10993:SF7">
    <property type="entry name" value="LIPOYLTRANSFERASE 2, MITOCHONDRIAL-RELATED"/>
    <property type="match status" value="1"/>
</dbReference>
<dbReference type="PANTHER" id="PTHR10993">
    <property type="entry name" value="OCTANOYLTRANSFERASE"/>
    <property type="match status" value="1"/>
</dbReference>
<dbReference type="Pfam" id="PF21948">
    <property type="entry name" value="LplA-B_cat"/>
    <property type="match status" value="1"/>
</dbReference>
<dbReference type="PIRSF" id="PIRSF016262">
    <property type="entry name" value="LPLase"/>
    <property type="match status" value="1"/>
</dbReference>
<dbReference type="SUPFAM" id="SSF55681">
    <property type="entry name" value="Class II aaRS and biotin synthetases"/>
    <property type="match status" value="1"/>
</dbReference>
<dbReference type="PROSITE" id="PS51733">
    <property type="entry name" value="BPL_LPL_CATALYTIC"/>
    <property type="match status" value="1"/>
</dbReference>
<dbReference type="PROSITE" id="PS01313">
    <property type="entry name" value="LIPB"/>
    <property type="match status" value="1"/>
</dbReference>